<proteinExistence type="evidence at protein level"/>
<feature type="chain" id="PRO_0000121744" description="Membrane-associated progesterone receptor component 2">
    <location>
        <begin position="1"/>
        <end position="217"/>
    </location>
</feature>
<feature type="transmembrane region" description="Helical" evidence="3">
    <location>
        <begin position="40"/>
        <end position="62"/>
    </location>
</feature>
<feature type="domain" description="Cytochrome b5 heme-binding">
    <location>
        <begin position="96"/>
        <end position="195"/>
    </location>
</feature>
<feature type="region of interest" description="Disordered" evidence="4">
    <location>
        <begin position="196"/>
        <end position="217"/>
    </location>
</feature>
<feature type="compositionally biased region" description="Acidic residues" evidence="4">
    <location>
        <begin position="200"/>
        <end position="209"/>
    </location>
</feature>
<feature type="modified residue" description="Phosphoserine" evidence="2">
    <location>
        <position position="84"/>
    </location>
</feature>
<feature type="modified residue" description="Phosphoserine" evidence="2">
    <location>
        <position position="98"/>
    </location>
</feature>
<feature type="modified residue" description="Phosphoserine" evidence="10">
    <location>
        <position position="202"/>
    </location>
</feature>
<feature type="modified residue" description="Phosphotyrosine" evidence="2">
    <location>
        <position position="204"/>
    </location>
</feature>
<feature type="modified residue" description="Phosphothreonine" evidence="11 12 13">
    <location>
        <position position="205"/>
    </location>
</feature>
<feature type="glycosylation site" description="O-linked (Xyl...) (chondroitin sulfate) serine" evidence="2">
    <location>
        <position position="15"/>
    </location>
</feature>
<gene>
    <name evidence="9" type="primary">Pgrmc2</name>
</gene>
<sequence length="217" mass="23334">MAAGDGDVKLSTLGSGGESGGDGSPGGAGATAARSSWVAALLATGGEMLLNVALVALVLLGAYRLWVRWGRRGLCSGPGAGEESPAATLPRMKKRDFSLEQLRQYDGARTPRILLAVNGKVFDVTKGSKFYGPAGPYGIFAGRDASRGLATFCLDKDALRDEYDDLSDLNAVQMESVREWEMQFKEKYDYVGRLLKPGEEPSEYTDEEDTKDHSKQD</sequence>
<accession>Q80UU9</accession>
<organism>
    <name type="scientific">Mus musculus</name>
    <name type="common">Mouse</name>
    <dbReference type="NCBI Taxonomy" id="10090"/>
    <lineage>
        <taxon>Eukaryota</taxon>
        <taxon>Metazoa</taxon>
        <taxon>Chordata</taxon>
        <taxon>Craniata</taxon>
        <taxon>Vertebrata</taxon>
        <taxon>Euteleostomi</taxon>
        <taxon>Mammalia</taxon>
        <taxon>Eutheria</taxon>
        <taxon>Euarchontoglires</taxon>
        <taxon>Glires</taxon>
        <taxon>Rodentia</taxon>
        <taxon>Myomorpha</taxon>
        <taxon>Muroidea</taxon>
        <taxon>Muridae</taxon>
        <taxon>Murinae</taxon>
        <taxon>Mus</taxon>
        <taxon>Mus</taxon>
    </lineage>
</organism>
<name>PGRC2_MOUSE</name>
<evidence type="ECO:0000250" key="1"/>
<evidence type="ECO:0000250" key="2">
    <source>
        <dbReference type="UniProtKB" id="O15173"/>
    </source>
</evidence>
<evidence type="ECO:0000255" key="3"/>
<evidence type="ECO:0000256" key="4">
    <source>
        <dbReference type="SAM" id="MobiDB-lite"/>
    </source>
</evidence>
<evidence type="ECO:0000269" key="5">
    <source>
    </source>
</evidence>
<evidence type="ECO:0000269" key="6">
    <source>
    </source>
</evidence>
<evidence type="ECO:0000305" key="7"/>
<evidence type="ECO:0000305" key="8">
    <source>
    </source>
</evidence>
<evidence type="ECO:0000312" key="9">
    <source>
        <dbReference type="MGI" id="MGI:1918054"/>
    </source>
</evidence>
<evidence type="ECO:0007744" key="10">
    <source>
    </source>
</evidence>
<evidence type="ECO:0007744" key="11">
    <source>
    </source>
</evidence>
<evidence type="ECO:0007744" key="12">
    <source>
    </source>
</evidence>
<evidence type="ECO:0007744" key="13">
    <source>
    </source>
</evidence>
<protein>
    <recommendedName>
        <fullName evidence="7">Membrane-associated progesterone receptor component 2</fullName>
    </recommendedName>
</protein>
<keyword id="KW-0256">Endoplasmic reticulum</keyword>
<keyword id="KW-0325">Glycoprotein</keyword>
<keyword id="KW-0446">Lipid-binding</keyword>
<keyword id="KW-0472">Membrane</keyword>
<keyword id="KW-0539">Nucleus</keyword>
<keyword id="KW-0597">Phosphoprotein</keyword>
<keyword id="KW-0654">Proteoglycan</keyword>
<keyword id="KW-0675">Receptor</keyword>
<keyword id="KW-1185">Reference proteome</keyword>
<keyword id="KW-0964">Secreted</keyword>
<keyword id="KW-0754">Steroid-binding</keyword>
<keyword id="KW-0812">Transmembrane</keyword>
<keyword id="KW-1133">Transmembrane helix</keyword>
<comment type="function">
    <text evidence="5 6 8">Required for the maintenance of uterine histoarchitecture and normal female reproductive lifespan (PubMed:28005395). May serve as a universal non-classical progesterone receptor in the uterus (Probable). Intracellular heme chaperone required for delivery of labile, or signaling heme, to the nucleus. Plays a role in adipocyte function and systemic glucose homeostasis. In brown fat, which has a high demand for heme, delivery of labile heme in the nucleus regulates the activity of heme-responsive transcriptional repressors such as NR1D1 and BACH1 (PubMed:31748741).</text>
</comment>
<comment type="subunit">
    <text evidence="2 6">Interacts with PGRMC1 (PubMed:31748741). Interacts with AAAS (By similarity).</text>
</comment>
<comment type="subcellular location">
    <subcellularLocation>
        <location evidence="7">Membrane</location>
        <topology evidence="7">Single-pass membrane protein</topology>
    </subcellularLocation>
    <subcellularLocation>
        <location evidence="2">Nucleus envelope</location>
    </subcellularLocation>
    <subcellularLocation>
        <location evidence="2">Endoplasmic reticulum</location>
    </subcellularLocation>
    <subcellularLocation>
        <location evidence="2">Secreted</location>
    </subcellularLocation>
</comment>
<comment type="tissue specificity">
    <text evidence="6">Expressed in brown adipose tissue, white adipose tissue, liver, heart, skeletal muscle, brain and adrenal gland.</text>
</comment>
<comment type="domain">
    <text evidence="1">The cytochrome b5 heme-binding domain lacks the conserved iron-binding His residues at positions 131 and 155.</text>
</comment>
<comment type="disruption phenotype">
    <text evidence="5 6">Adipose tissue-specific knockout mice adapted to 30 degrees Celsius show no difference in body weight or white adipose tissue (WAT) mass but have reduced brown adipose tissue (BAT) weight relative to their wild-type littermates. BAT loses its distinctive reddish color. In contrast to wild-type mice, which activate thermogenesis and preserve body temperature when exposed to cold (4 degrees Celsius), mutants rapidly become hypothermic and die if not rescued. They have a total heme content reduced of about 60%. Mutants housed at room temperature and fed a high-fat diet (HFD) show no differences in body weight or composition, except for decreased BAT mass. However, they have higher fasting glycaemia and decreased glucose tolerance and insulin sensitivity. They also exhibit hyperlipidaemia and exacerbated liver steatosis with about 70% more triglycerides (PubMed:31748741). Conditional knockout from female reproductive tissues results in postimplantation embryonic death leading to subfertility, with female mice producing 47% fewer pups/litter than wild-types. They undergo premature reproductive senescence by parities 2 to 5, producing 37.8% fewer litters overall during the trial compared with wild-types (PubMed:28005395). Double conditional knockout for PGRMC1 and PGRMC2 from female reproductive tissues results in postimplantation embryonic death leading to subfertility, with female mice producing fewer pups/litter than wild-types. They undergo premature reproductive senescence, producing fewer litters overall during the trial compared with wild-types (PubMed:28005395).</text>
</comment>
<comment type="miscellaneous">
    <text evidence="2">Non-classical progesterone receptors involved in extranuclear signaling are classified in 2 groups: the class II progestin and adipoQ receptor (PAQR) family (also called mPRs) (PAQR5, PAQR6, PAQR7, PAQR8 and PAQR9) and the b5-like heme/steroid-binding protein family (also called MAPRs) (PGRMC1, PGRMC2, NENF and CYB5D2).</text>
</comment>
<comment type="similarity">
    <text evidence="7">Belongs to the cytochrome b5 family. MAPR subfamily.</text>
</comment>
<dbReference type="EMBL" id="AC100511">
    <property type="status" value="NOT_ANNOTATED_CDS"/>
    <property type="molecule type" value="Genomic_DNA"/>
</dbReference>
<dbReference type="EMBL" id="BC044759">
    <property type="protein sequence ID" value="AAH44759.1"/>
    <property type="molecule type" value="mRNA"/>
</dbReference>
<dbReference type="CCDS" id="CCDS50899.1"/>
<dbReference type="RefSeq" id="NP_081834.1">
    <property type="nucleotide sequence ID" value="NM_027558.2"/>
</dbReference>
<dbReference type="SMR" id="Q80UU9"/>
<dbReference type="BioGRID" id="214264">
    <property type="interactions" value="11"/>
</dbReference>
<dbReference type="FunCoup" id="Q80UU9">
    <property type="interactions" value="3347"/>
</dbReference>
<dbReference type="IntAct" id="Q80UU9">
    <property type="interactions" value="6"/>
</dbReference>
<dbReference type="MINT" id="Q80UU9"/>
<dbReference type="STRING" id="10090.ENSMUSP00000056643"/>
<dbReference type="GlyGen" id="Q80UU9">
    <property type="glycosylation" value="2 sites, 1 O-linked glycan (1 site)"/>
</dbReference>
<dbReference type="iPTMnet" id="Q80UU9"/>
<dbReference type="PhosphoSitePlus" id="Q80UU9"/>
<dbReference type="SwissPalm" id="Q80UU9"/>
<dbReference type="jPOST" id="Q80UU9"/>
<dbReference type="PaxDb" id="10090-ENSMUSP00000056643"/>
<dbReference type="PeptideAtlas" id="Q80UU9"/>
<dbReference type="ProteomicsDB" id="289480"/>
<dbReference type="Pumba" id="Q80UU9"/>
<dbReference type="Antibodypedia" id="27009">
    <property type="antibodies" value="277 antibodies from 32 providers"/>
</dbReference>
<dbReference type="Ensembl" id="ENSMUST00000058578.8">
    <property type="protein sequence ID" value="ENSMUSP00000056643.8"/>
    <property type="gene ID" value="ENSMUSG00000049940.8"/>
</dbReference>
<dbReference type="GeneID" id="70804"/>
<dbReference type="KEGG" id="mmu:70804"/>
<dbReference type="UCSC" id="uc008pce.2">
    <property type="organism name" value="mouse"/>
</dbReference>
<dbReference type="AGR" id="MGI:1918054"/>
<dbReference type="CTD" id="10424"/>
<dbReference type="MGI" id="MGI:1918054">
    <property type="gene designation" value="Pgrmc2"/>
</dbReference>
<dbReference type="VEuPathDB" id="HostDB:ENSMUSG00000049940"/>
<dbReference type="eggNOG" id="KOG1110">
    <property type="taxonomic scope" value="Eukaryota"/>
</dbReference>
<dbReference type="GeneTree" id="ENSGT00940000159744"/>
<dbReference type="HOGENOM" id="CLU_042860_1_0_1"/>
<dbReference type="InParanoid" id="Q80UU9"/>
<dbReference type="OMA" id="QNTIEAD"/>
<dbReference type="OrthoDB" id="547796at2759"/>
<dbReference type="PhylomeDB" id="Q80UU9"/>
<dbReference type="TreeFam" id="TF314562"/>
<dbReference type="Reactome" id="R-MMU-8980692">
    <property type="pathway name" value="RHOA GTPase cycle"/>
</dbReference>
<dbReference type="Reactome" id="R-MMU-9013404">
    <property type="pathway name" value="RAC2 GTPase cycle"/>
</dbReference>
<dbReference type="Reactome" id="R-MMU-9013405">
    <property type="pathway name" value="RHOD GTPase cycle"/>
</dbReference>
<dbReference type="Reactome" id="R-MMU-9013408">
    <property type="pathway name" value="RHOG GTPase cycle"/>
</dbReference>
<dbReference type="Reactome" id="R-MMU-9013423">
    <property type="pathway name" value="RAC3 GTPase cycle"/>
</dbReference>
<dbReference type="Reactome" id="R-MMU-9707616">
    <property type="pathway name" value="Heme signaling"/>
</dbReference>
<dbReference type="BioGRID-ORCS" id="70804">
    <property type="hits" value="6 hits in 78 CRISPR screens"/>
</dbReference>
<dbReference type="ChiTaRS" id="Pgrmc2">
    <property type="organism name" value="mouse"/>
</dbReference>
<dbReference type="PRO" id="PR:Q80UU9"/>
<dbReference type="Proteomes" id="UP000000589">
    <property type="component" value="Chromosome 3"/>
</dbReference>
<dbReference type="RNAct" id="Q80UU9">
    <property type="molecule type" value="protein"/>
</dbReference>
<dbReference type="Bgee" id="ENSMUSG00000049940">
    <property type="expression patterns" value="Expressed in otic placode and 264 other cell types or tissues"/>
</dbReference>
<dbReference type="GO" id="GO:0005783">
    <property type="term" value="C:endoplasmic reticulum"/>
    <property type="evidence" value="ECO:0000250"/>
    <property type="project" value="UniProtKB"/>
</dbReference>
<dbReference type="GO" id="GO:0005576">
    <property type="term" value="C:extracellular region"/>
    <property type="evidence" value="ECO:0007669"/>
    <property type="project" value="UniProtKB-SubCell"/>
</dbReference>
<dbReference type="GO" id="GO:0098978">
    <property type="term" value="C:glutamatergic synapse"/>
    <property type="evidence" value="ECO:0000314"/>
    <property type="project" value="SynGO"/>
</dbReference>
<dbReference type="GO" id="GO:0016020">
    <property type="term" value="C:membrane"/>
    <property type="evidence" value="ECO:0007669"/>
    <property type="project" value="UniProtKB-SubCell"/>
</dbReference>
<dbReference type="GO" id="GO:0005635">
    <property type="term" value="C:nuclear envelope"/>
    <property type="evidence" value="ECO:0000250"/>
    <property type="project" value="UniProtKB"/>
</dbReference>
<dbReference type="GO" id="GO:0045202">
    <property type="term" value="C:synapse"/>
    <property type="evidence" value="ECO:0000314"/>
    <property type="project" value="SynGO"/>
</dbReference>
<dbReference type="GO" id="GO:0020037">
    <property type="term" value="F:heme binding"/>
    <property type="evidence" value="ECO:0000314"/>
    <property type="project" value="UniProtKB"/>
</dbReference>
<dbReference type="GO" id="GO:0015232">
    <property type="term" value="F:heme transmembrane transporter activity"/>
    <property type="evidence" value="ECO:0000314"/>
    <property type="project" value="UniProtKB"/>
</dbReference>
<dbReference type="GO" id="GO:0005496">
    <property type="term" value="F:steroid binding"/>
    <property type="evidence" value="ECO:0007669"/>
    <property type="project" value="UniProtKB-KW"/>
</dbReference>
<dbReference type="GO" id="GO:0060612">
    <property type="term" value="P:adipose tissue development"/>
    <property type="evidence" value="ECO:0000250"/>
    <property type="project" value="UniProtKB"/>
</dbReference>
<dbReference type="GO" id="GO:0015886">
    <property type="term" value="P:heme transport"/>
    <property type="evidence" value="ECO:0000314"/>
    <property type="project" value="UniProtKB"/>
</dbReference>
<dbReference type="FunFam" id="3.10.120.10:FF:000003">
    <property type="entry name" value="membrane-associated progesterone receptor component 1"/>
    <property type="match status" value="1"/>
</dbReference>
<dbReference type="Gene3D" id="3.10.120.10">
    <property type="entry name" value="Cytochrome b5-like heme/steroid binding domain"/>
    <property type="match status" value="1"/>
</dbReference>
<dbReference type="InterPro" id="IPR001199">
    <property type="entry name" value="Cyt_B5-like_heme/steroid-bd"/>
</dbReference>
<dbReference type="InterPro" id="IPR036400">
    <property type="entry name" value="Cyt_B5-like_heme/steroid_sf"/>
</dbReference>
<dbReference type="InterPro" id="IPR050577">
    <property type="entry name" value="MAPR/NEUFC/NENF-like"/>
</dbReference>
<dbReference type="PANTHER" id="PTHR10281:SF24">
    <property type="entry name" value="MEMBRANE-ASSOCIATED PROGESTERONE RECEPTOR COMPONENT 2"/>
    <property type="match status" value="1"/>
</dbReference>
<dbReference type="PANTHER" id="PTHR10281">
    <property type="entry name" value="MEMBRANE-ASSOCIATED PROGESTERONE RECEPTOR COMPONENT-RELATED"/>
    <property type="match status" value="1"/>
</dbReference>
<dbReference type="Pfam" id="PF00173">
    <property type="entry name" value="Cyt-b5"/>
    <property type="match status" value="1"/>
</dbReference>
<dbReference type="SMART" id="SM01117">
    <property type="entry name" value="Cyt-b5"/>
    <property type="match status" value="1"/>
</dbReference>
<dbReference type="SUPFAM" id="SSF55856">
    <property type="entry name" value="Cytochrome b5-like heme/steroid binding domain"/>
    <property type="match status" value="1"/>
</dbReference>
<reference key="1">
    <citation type="journal article" date="2009" name="PLoS Biol.">
        <title>Lineage-specific biology revealed by a finished genome assembly of the mouse.</title>
        <authorList>
            <person name="Church D.M."/>
            <person name="Goodstadt L."/>
            <person name="Hillier L.W."/>
            <person name="Zody M.C."/>
            <person name="Goldstein S."/>
            <person name="She X."/>
            <person name="Bult C.J."/>
            <person name="Agarwala R."/>
            <person name="Cherry J.L."/>
            <person name="DiCuccio M."/>
            <person name="Hlavina W."/>
            <person name="Kapustin Y."/>
            <person name="Meric P."/>
            <person name="Maglott D."/>
            <person name="Birtle Z."/>
            <person name="Marques A.C."/>
            <person name="Graves T."/>
            <person name="Zhou S."/>
            <person name="Teague B."/>
            <person name="Potamousis K."/>
            <person name="Churas C."/>
            <person name="Place M."/>
            <person name="Herschleb J."/>
            <person name="Runnheim R."/>
            <person name="Forrest D."/>
            <person name="Amos-Landgraf J."/>
            <person name="Schwartz D.C."/>
            <person name="Cheng Z."/>
            <person name="Lindblad-Toh K."/>
            <person name="Eichler E.E."/>
            <person name="Ponting C.P."/>
        </authorList>
    </citation>
    <scope>NUCLEOTIDE SEQUENCE [LARGE SCALE GENOMIC DNA]</scope>
    <source>
        <strain>C57BL/6J</strain>
    </source>
</reference>
<reference key="2">
    <citation type="journal article" date="2004" name="Genome Res.">
        <title>The status, quality, and expansion of the NIH full-length cDNA project: the Mammalian Gene Collection (MGC).</title>
        <authorList>
            <consortium name="The MGC Project Team"/>
        </authorList>
    </citation>
    <scope>NUCLEOTIDE SEQUENCE [LARGE SCALE MRNA] OF 4-217</scope>
    <source>
        <strain>129</strain>
        <tissue>Mammary tumor</tissue>
    </source>
</reference>
<reference key="3">
    <citation type="journal article" date="2007" name="Proc. Natl. Acad. Sci. U.S.A.">
        <title>Large-scale phosphorylation analysis of mouse liver.</title>
        <authorList>
            <person name="Villen J."/>
            <person name="Beausoleil S.A."/>
            <person name="Gerber S.A."/>
            <person name="Gygi S.P."/>
        </authorList>
    </citation>
    <scope>PHOSPHORYLATION [LARGE SCALE ANALYSIS] AT SER-202</scope>
    <scope>IDENTIFICATION BY MASS SPECTROMETRY [LARGE SCALE ANALYSIS]</scope>
    <source>
        <tissue>Liver</tissue>
    </source>
</reference>
<reference key="4">
    <citation type="journal article" date="2008" name="J. Proteome Res.">
        <title>Specific phosphopeptide enrichment with immobilized titanium ion affinity chromatography adsorbent for phosphoproteome analysis.</title>
        <authorList>
            <person name="Zhou H."/>
            <person name="Ye M."/>
            <person name="Dong J."/>
            <person name="Han G."/>
            <person name="Jiang X."/>
            <person name="Wu R."/>
            <person name="Zou H."/>
        </authorList>
    </citation>
    <scope>PHOSPHORYLATION [LARGE SCALE ANALYSIS] AT THR-205</scope>
    <scope>IDENTIFICATION BY MASS SPECTROMETRY [LARGE SCALE ANALYSIS]</scope>
    <source>
        <tissue>Liver</tissue>
    </source>
</reference>
<reference key="5">
    <citation type="journal article" date="2009" name="Immunity">
        <title>The phagosomal proteome in interferon-gamma-activated macrophages.</title>
        <authorList>
            <person name="Trost M."/>
            <person name="English L."/>
            <person name="Lemieux S."/>
            <person name="Courcelles M."/>
            <person name="Desjardins M."/>
            <person name="Thibault P."/>
        </authorList>
    </citation>
    <scope>IDENTIFICATION BY MASS SPECTROMETRY [LARGE SCALE ANALYSIS]</scope>
</reference>
<reference key="6">
    <citation type="journal article" date="2009" name="Mol. Cell. Proteomics">
        <title>Large scale localization of protein phosphorylation by use of electron capture dissociation mass spectrometry.</title>
        <authorList>
            <person name="Sweet S.M."/>
            <person name="Bailey C.M."/>
            <person name="Cunningham D.L."/>
            <person name="Heath J.K."/>
            <person name="Cooper H.J."/>
        </authorList>
    </citation>
    <scope>PHOSPHORYLATION [LARGE SCALE ANALYSIS] AT THR-205</scope>
    <scope>IDENTIFICATION BY MASS SPECTROMETRY [LARGE SCALE ANALYSIS]</scope>
    <source>
        <tissue>Embryonic fibroblast</tissue>
    </source>
</reference>
<reference key="7">
    <citation type="journal article" date="2010" name="Cell">
        <title>A tissue-specific atlas of mouse protein phosphorylation and expression.</title>
        <authorList>
            <person name="Huttlin E.L."/>
            <person name="Jedrychowski M.P."/>
            <person name="Elias J.E."/>
            <person name="Goswami T."/>
            <person name="Rad R."/>
            <person name="Beausoleil S.A."/>
            <person name="Villen J."/>
            <person name="Haas W."/>
            <person name="Sowa M.E."/>
            <person name="Gygi S.P."/>
        </authorList>
    </citation>
    <scope>PHOSPHORYLATION [LARGE SCALE ANALYSIS] AT THR-205</scope>
    <scope>IDENTIFICATION BY MASS SPECTROMETRY [LARGE SCALE ANALYSIS]</scope>
    <source>
        <tissue>Brain</tissue>
        <tissue>Brown adipose tissue</tissue>
        <tissue>Heart</tissue>
        <tissue>Kidney</tissue>
        <tissue>Liver</tissue>
        <tissue>Lung</tissue>
        <tissue>Pancreas</tissue>
        <tissue>Spleen</tissue>
        <tissue>Testis</tissue>
    </source>
</reference>
<reference key="8">
    <citation type="journal article" date="2017" name="Endocrinology">
        <title>Conditional Ablation of Progesterone Receptor Membrane Component 2 Causes Female Premature Reproductive Senescence.</title>
        <authorList>
            <person name="Clark N.C."/>
            <person name="Pru C.A."/>
            <person name="Yee S.P."/>
            <person name="Lydon J.P."/>
            <person name="Peluso J.J."/>
            <person name="Pru J.K."/>
        </authorList>
    </citation>
    <scope>DISRUPTION PHENOTYPE</scope>
    <scope>FUNCTION</scope>
</reference>
<reference key="9">
    <citation type="journal article" date="2019" name="Nature">
        <title>PGRMC2 is an intracellular haem chaperone critical for adipocyte function.</title>
        <authorList>
            <person name="Galmozzi A."/>
            <person name="Kok B.P."/>
            <person name="Kim A.S."/>
            <person name="Montenegro-Burke J.R."/>
            <person name="Lee J.Y."/>
            <person name="Spreafico R."/>
            <person name="Mosure S."/>
            <person name="Albert V."/>
            <person name="Cintron-Colon R."/>
            <person name="Godio C."/>
            <person name="Webb W.R."/>
            <person name="Conti B."/>
            <person name="Solt L.A."/>
            <person name="Kojetin D."/>
            <person name="Parker C.G."/>
            <person name="Peluso J.J."/>
            <person name="Pru J.K."/>
            <person name="Siuzdak G."/>
            <person name="Cravatt B.F."/>
            <person name="Saez E."/>
        </authorList>
    </citation>
    <scope>FUNCTION</scope>
    <scope>TISSUE SPECIFICITY</scope>
    <scope>DISRUPTION PHENOTYPE</scope>
    <scope>INTERACTION WITH PGRMC1</scope>
</reference>